<proteinExistence type="inferred from homology"/>
<gene>
    <name evidence="1" type="primary">glnS</name>
    <name type="ordered locus">BUAP5A_408</name>
</gene>
<accession>B8D9J3</accession>
<comment type="catalytic activity">
    <reaction evidence="1">
        <text>tRNA(Gln) + L-glutamine + ATP = L-glutaminyl-tRNA(Gln) + AMP + diphosphate</text>
        <dbReference type="Rhea" id="RHEA:20121"/>
        <dbReference type="Rhea" id="RHEA-COMP:9662"/>
        <dbReference type="Rhea" id="RHEA-COMP:9681"/>
        <dbReference type="ChEBI" id="CHEBI:30616"/>
        <dbReference type="ChEBI" id="CHEBI:33019"/>
        <dbReference type="ChEBI" id="CHEBI:58359"/>
        <dbReference type="ChEBI" id="CHEBI:78442"/>
        <dbReference type="ChEBI" id="CHEBI:78521"/>
        <dbReference type="ChEBI" id="CHEBI:456215"/>
        <dbReference type="EC" id="6.1.1.18"/>
    </reaction>
</comment>
<comment type="subunit">
    <text evidence="1">Monomer.</text>
</comment>
<comment type="subcellular location">
    <subcellularLocation>
        <location evidence="1">Cytoplasm</location>
    </subcellularLocation>
</comment>
<comment type="similarity">
    <text evidence="1">Belongs to the class-I aminoacyl-tRNA synthetase family.</text>
</comment>
<name>SYQ_BUCA5</name>
<keyword id="KW-0030">Aminoacyl-tRNA synthetase</keyword>
<keyword id="KW-0067">ATP-binding</keyword>
<keyword id="KW-0963">Cytoplasm</keyword>
<keyword id="KW-0436">Ligase</keyword>
<keyword id="KW-0547">Nucleotide-binding</keyword>
<keyword id="KW-0648">Protein biosynthesis</keyword>
<sequence length="571" mass="67860">MDTKKEIKNNNFICQIINKDLNENKNLSFYTRFPPEPNGYLHIGHAKSICLNFELASLYKGRCNLRFDDTNPLKENIKYIKSIKYDINWLGYKWHGNVRYASEYFLKLYQYAQELIKKGLAYVDHLTKEQIREYRGTLNTPGKNSPYRNRTIQENIELFEKMKKGDFSEGEACLRAKINMSSSSIIMRDPVLYRIIFIKHHQTQNKWCIYPMYDFAHCLSDSIEGITHSLCTLEFQDNKFLYNWILKNTSVKHYPKQYEFSRLNLEFSILSKRKIKILIDKNIIEGWDDPRIPTLSALRRKGYTPSSIKNFCQKIGVTKQNNLIEFSMLEHCIRKELNQTAIRTMAILDPIKIFLYNLDSNYKEEFIVPNHPNNPEMGTHKIIFTNTIYIDRSDFKEKYDKKYKRLKLGEKIRLRYSYIIHAEKIEKDEYGNISNIICYCDLNTLGRKPKDNKNPAVIHWISEKNTLSAEFKLYDQLFNIKNPEQQENFLLYINSKSLIKKFGFIEKKIGEEIQKKISNNNIEIFFQFERIGYFCIDFIDSKKNQLVFNRTVGLRDTWDSKKIKTKNITNN</sequence>
<reference key="1">
    <citation type="journal article" date="2009" name="Science">
        <title>The dynamics and time scale of ongoing genomic erosion in symbiotic bacteria.</title>
        <authorList>
            <person name="Moran N.A."/>
            <person name="McLaughlin H.J."/>
            <person name="Sorek R."/>
        </authorList>
    </citation>
    <scope>NUCLEOTIDE SEQUENCE [LARGE SCALE GENOMIC DNA]</scope>
    <source>
        <strain>5A</strain>
    </source>
</reference>
<protein>
    <recommendedName>
        <fullName evidence="1">Glutamine--tRNA ligase</fullName>
        <ecNumber evidence="1">6.1.1.18</ecNumber>
    </recommendedName>
    <alternativeName>
        <fullName evidence="1">Glutaminyl-tRNA synthetase</fullName>
        <shortName evidence="1">GlnRS</shortName>
    </alternativeName>
</protein>
<evidence type="ECO:0000255" key="1">
    <source>
        <dbReference type="HAMAP-Rule" id="MF_00126"/>
    </source>
</evidence>
<dbReference type="EC" id="6.1.1.18" evidence="1"/>
<dbReference type="EMBL" id="CP001161">
    <property type="protein sequence ID" value="ACL30764.1"/>
    <property type="molecule type" value="Genomic_DNA"/>
</dbReference>
<dbReference type="RefSeq" id="WP_009874368.1">
    <property type="nucleotide sequence ID" value="NC_011833.1"/>
</dbReference>
<dbReference type="SMR" id="B8D9J3"/>
<dbReference type="KEGG" id="bap:BUAP5A_408"/>
<dbReference type="HOGENOM" id="CLU_001882_2_3_6"/>
<dbReference type="OrthoDB" id="9801560at2"/>
<dbReference type="Proteomes" id="UP000006904">
    <property type="component" value="Chromosome"/>
</dbReference>
<dbReference type="GO" id="GO:0005829">
    <property type="term" value="C:cytosol"/>
    <property type="evidence" value="ECO:0007669"/>
    <property type="project" value="TreeGrafter"/>
</dbReference>
<dbReference type="GO" id="GO:0005524">
    <property type="term" value="F:ATP binding"/>
    <property type="evidence" value="ECO:0007669"/>
    <property type="project" value="UniProtKB-UniRule"/>
</dbReference>
<dbReference type="GO" id="GO:0004819">
    <property type="term" value="F:glutamine-tRNA ligase activity"/>
    <property type="evidence" value="ECO:0007669"/>
    <property type="project" value="UniProtKB-UniRule"/>
</dbReference>
<dbReference type="GO" id="GO:0006425">
    <property type="term" value="P:glutaminyl-tRNA aminoacylation"/>
    <property type="evidence" value="ECO:0007669"/>
    <property type="project" value="InterPro"/>
</dbReference>
<dbReference type="GO" id="GO:0006424">
    <property type="term" value="P:glutamyl-tRNA aminoacylation"/>
    <property type="evidence" value="ECO:0007669"/>
    <property type="project" value="UniProtKB-UniRule"/>
</dbReference>
<dbReference type="FunFam" id="1.10.1160.10:FF:000001">
    <property type="entry name" value="Glutamine--tRNA ligase"/>
    <property type="match status" value="1"/>
</dbReference>
<dbReference type="FunFam" id="2.40.240.10:FF:000007">
    <property type="entry name" value="Glutamine--tRNA ligase"/>
    <property type="match status" value="1"/>
</dbReference>
<dbReference type="FunFam" id="3.90.800.10:FF:000001">
    <property type="entry name" value="Glutamine--tRNA ligase"/>
    <property type="match status" value="1"/>
</dbReference>
<dbReference type="FunFam" id="3.40.50.620:FF:000037">
    <property type="entry name" value="Glutamine--tRNA ligase cytoplasmic"/>
    <property type="match status" value="1"/>
</dbReference>
<dbReference type="Gene3D" id="1.10.1160.10">
    <property type="entry name" value="Glutamyl-trna Synthetase, Domain 2"/>
    <property type="match status" value="1"/>
</dbReference>
<dbReference type="Gene3D" id="3.90.800.10">
    <property type="entry name" value="Glutamyl-tRNA Synthetase, Domain 3"/>
    <property type="match status" value="1"/>
</dbReference>
<dbReference type="Gene3D" id="3.40.50.620">
    <property type="entry name" value="HUPs"/>
    <property type="match status" value="1"/>
</dbReference>
<dbReference type="Gene3D" id="2.40.240.10">
    <property type="entry name" value="Ribosomal Protein L25, Chain P"/>
    <property type="match status" value="2"/>
</dbReference>
<dbReference type="HAMAP" id="MF_00126">
    <property type="entry name" value="Gln_tRNA_synth"/>
    <property type="match status" value="1"/>
</dbReference>
<dbReference type="InterPro" id="IPR001412">
    <property type="entry name" value="aa-tRNA-synth_I_CS"/>
</dbReference>
<dbReference type="InterPro" id="IPR004514">
    <property type="entry name" value="Gln-tRNA-synth"/>
</dbReference>
<dbReference type="InterPro" id="IPR050132">
    <property type="entry name" value="Gln/Glu-tRNA_Ligase"/>
</dbReference>
<dbReference type="InterPro" id="IPR022861">
    <property type="entry name" value="Gln_tRNA_ligase_bac"/>
</dbReference>
<dbReference type="InterPro" id="IPR000924">
    <property type="entry name" value="Glu/Gln-tRNA-synth"/>
</dbReference>
<dbReference type="InterPro" id="IPR020058">
    <property type="entry name" value="Glu/Gln-tRNA-synth_Ib_cat-dom"/>
</dbReference>
<dbReference type="InterPro" id="IPR020059">
    <property type="entry name" value="Glu/Gln-tRNA-synth_Ib_codon-bd"/>
</dbReference>
<dbReference type="InterPro" id="IPR020061">
    <property type="entry name" value="Glu_tRNA_lig_a-bdl"/>
</dbReference>
<dbReference type="InterPro" id="IPR020056">
    <property type="entry name" value="Rbsml_bL25/Gln-tRNA_synth_N"/>
</dbReference>
<dbReference type="InterPro" id="IPR011035">
    <property type="entry name" value="Ribosomal_bL25/Gln-tRNA_synth"/>
</dbReference>
<dbReference type="InterPro" id="IPR014729">
    <property type="entry name" value="Rossmann-like_a/b/a_fold"/>
</dbReference>
<dbReference type="InterPro" id="IPR049437">
    <property type="entry name" value="tRNA-synt_1c_C2"/>
</dbReference>
<dbReference type="NCBIfam" id="TIGR00440">
    <property type="entry name" value="glnS"/>
    <property type="match status" value="1"/>
</dbReference>
<dbReference type="NCBIfam" id="NF011291">
    <property type="entry name" value="PRK14703.1"/>
    <property type="match status" value="1"/>
</dbReference>
<dbReference type="PANTHER" id="PTHR43097:SF5">
    <property type="entry name" value="GLUTAMATE--TRNA LIGASE"/>
    <property type="match status" value="1"/>
</dbReference>
<dbReference type="PANTHER" id="PTHR43097">
    <property type="entry name" value="GLUTAMINE-TRNA LIGASE"/>
    <property type="match status" value="1"/>
</dbReference>
<dbReference type="Pfam" id="PF00749">
    <property type="entry name" value="tRNA-synt_1c"/>
    <property type="match status" value="1"/>
</dbReference>
<dbReference type="Pfam" id="PF03950">
    <property type="entry name" value="tRNA-synt_1c_C"/>
    <property type="match status" value="1"/>
</dbReference>
<dbReference type="Pfam" id="PF20974">
    <property type="entry name" value="tRNA-synt_1c_C2"/>
    <property type="match status" value="1"/>
</dbReference>
<dbReference type="PRINTS" id="PR00987">
    <property type="entry name" value="TRNASYNTHGLU"/>
</dbReference>
<dbReference type="SUPFAM" id="SSF52374">
    <property type="entry name" value="Nucleotidylyl transferase"/>
    <property type="match status" value="1"/>
</dbReference>
<dbReference type="SUPFAM" id="SSF50715">
    <property type="entry name" value="Ribosomal protein L25-like"/>
    <property type="match status" value="1"/>
</dbReference>
<dbReference type="PROSITE" id="PS00178">
    <property type="entry name" value="AA_TRNA_LIGASE_I"/>
    <property type="match status" value="1"/>
</dbReference>
<feature type="chain" id="PRO_1000199091" description="Glutamine--tRNA ligase">
    <location>
        <begin position="1"/>
        <end position="571"/>
    </location>
</feature>
<feature type="short sequence motif" description="'HIGH' region" evidence="1">
    <location>
        <begin position="35"/>
        <end position="45"/>
    </location>
</feature>
<feature type="short sequence motif" description="'KMSKS' region" evidence="1">
    <location>
        <begin position="269"/>
        <end position="273"/>
    </location>
</feature>
<feature type="binding site" evidence="1">
    <location>
        <begin position="36"/>
        <end position="38"/>
    </location>
    <ligand>
        <name>ATP</name>
        <dbReference type="ChEBI" id="CHEBI:30616"/>
    </ligand>
</feature>
<feature type="binding site" evidence="1">
    <location>
        <begin position="42"/>
        <end position="48"/>
    </location>
    <ligand>
        <name>ATP</name>
        <dbReference type="ChEBI" id="CHEBI:30616"/>
    </ligand>
</feature>
<feature type="binding site" evidence="1">
    <location>
        <position position="68"/>
    </location>
    <ligand>
        <name>L-glutamine</name>
        <dbReference type="ChEBI" id="CHEBI:58359"/>
    </ligand>
</feature>
<feature type="binding site" evidence="1">
    <location>
        <position position="213"/>
    </location>
    <ligand>
        <name>L-glutamine</name>
        <dbReference type="ChEBI" id="CHEBI:58359"/>
    </ligand>
</feature>
<feature type="binding site" evidence="1">
    <location>
        <position position="232"/>
    </location>
    <ligand>
        <name>ATP</name>
        <dbReference type="ChEBI" id="CHEBI:30616"/>
    </ligand>
</feature>
<feature type="binding site" evidence="1">
    <location>
        <begin position="262"/>
        <end position="263"/>
    </location>
    <ligand>
        <name>ATP</name>
        <dbReference type="ChEBI" id="CHEBI:30616"/>
    </ligand>
</feature>
<feature type="binding site" evidence="1">
    <location>
        <begin position="270"/>
        <end position="272"/>
    </location>
    <ligand>
        <name>ATP</name>
        <dbReference type="ChEBI" id="CHEBI:30616"/>
    </ligand>
</feature>
<organism>
    <name type="scientific">Buchnera aphidicola subsp. Acyrthosiphon pisum (strain 5A)</name>
    <dbReference type="NCBI Taxonomy" id="563178"/>
    <lineage>
        <taxon>Bacteria</taxon>
        <taxon>Pseudomonadati</taxon>
        <taxon>Pseudomonadota</taxon>
        <taxon>Gammaproteobacteria</taxon>
        <taxon>Enterobacterales</taxon>
        <taxon>Erwiniaceae</taxon>
        <taxon>Buchnera</taxon>
    </lineage>
</organism>